<protein>
    <recommendedName>
        <fullName evidence="1">Enolase</fullName>
        <ecNumber evidence="1">4.2.1.11</ecNumber>
    </recommendedName>
    <alternativeName>
        <fullName evidence="1">2-phospho-D-glycerate hydro-lyase</fullName>
    </alternativeName>
    <alternativeName>
        <fullName evidence="1">2-phosphoglycerate dehydratase</fullName>
    </alternativeName>
</protein>
<accession>B2I2A5</accession>
<name>ENO_ACIBC</name>
<keyword id="KW-0963">Cytoplasm</keyword>
<keyword id="KW-0324">Glycolysis</keyword>
<keyword id="KW-0456">Lyase</keyword>
<keyword id="KW-0460">Magnesium</keyword>
<keyword id="KW-0479">Metal-binding</keyword>
<keyword id="KW-0964">Secreted</keyword>
<organism>
    <name type="scientific">Acinetobacter baumannii (strain ACICU)</name>
    <dbReference type="NCBI Taxonomy" id="405416"/>
    <lineage>
        <taxon>Bacteria</taxon>
        <taxon>Pseudomonadati</taxon>
        <taxon>Pseudomonadota</taxon>
        <taxon>Gammaproteobacteria</taxon>
        <taxon>Moraxellales</taxon>
        <taxon>Moraxellaceae</taxon>
        <taxon>Acinetobacter</taxon>
        <taxon>Acinetobacter calcoaceticus/baumannii complex</taxon>
    </lineage>
</organism>
<reference key="1">
    <citation type="journal article" date="2008" name="Antimicrob. Agents Chemother.">
        <title>Whole-genome pyrosequencing of an epidemic multidrug-resistant Acinetobacter baumannii strain belonging to the European clone II group.</title>
        <authorList>
            <person name="Iacono M."/>
            <person name="Villa L."/>
            <person name="Fortini D."/>
            <person name="Bordoni R."/>
            <person name="Imperi F."/>
            <person name="Bonnal R.J."/>
            <person name="Sicheritz-Ponten T."/>
            <person name="De Bellis G."/>
            <person name="Visca P."/>
            <person name="Cassone A."/>
            <person name="Carattoli A."/>
        </authorList>
    </citation>
    <scope>NUCLEOTIDE SEQUENCE [LARGE SCALE GENOMIC DNA]</scope>
    <source>
        <strain>ACICU</strain>
    </source>
</reference>
<feature type="chain" id="PRO_1000132973" description="Enolase">
    <location>
        <begin position="1"/>
        <end position="429"/>
    </location>
</feature>
<feature type="active site" description="Proton donor" evidence="1">
    <location>
        <position position="208"/>
    </location>
</feature>
<feature type="active site" description="Proton acceptor" evidence="1">
    <location>
        <position position="341"/>
    </location>
</feature>
<feature type="binding site" evidence="1">
    <location>
        <position position="166"/>
    </location>
    <ligand>
        <name>(2R)-2-phosphoglycerate</name>
        <dbReference type="ChEBI" id="CHEBI:58289"/>
    </ligand>
</feature>
<feature type="binding site" evidence="1">
    <location>
        <position position="245"/>
    </location>
    <ligand>
        <name>Mg(2+)</name>
        <dbReference type="ChEBI" id="CHEBI:18420"/>
    </ligand>
</feature>
<feature type="binding site" evidence="1">
    <location>
        <position position="289"/>
    </location>
    <ligand>
        <name>Mg(2+)</name>
        <dbReference type="ChEBI" id="CHEBI:18420"/>
    </ligand>
</feature>
<feature type="binding site" evidence="1">
    <location>
        <position position="316"/>
    </location>
    <ligand>
        <name>Mg(2+)</name>
        <dbReference type="ChEBI" id="CHEBI:18420"/>
    </ligand>
</feature>
<feature type="binding site" evidence="1">
    <location>
        <position position="341"/>
    </location>
    <ligand>
        <name>(2R)-2-phosphoglycerate</name>
        <dbReference type="ChEBI" id="CHEBI:58289"/>
    </ligand>
</feature>
<feature type="binding site" evidence="1">
    <location>
        <position position="370"/>
    </location>
    <ligand>
        <name>(2R)-2-phosphoglycerate</name>
        <dbReference type="ChEBI" id="CHEBI:58289"/>
    </ligand>
</feature>
<feature type="binding site" evidence="1">
    <location>
        <position position="371"/>
    </location>
    <ligand>
        <name>(2R)-2-phosphoglycerate</name>
        <dbReference type="ChEBI" id="CHEBI:58289"/>
    </ligand>
</feature>
<feature type="binding site" evidence="1">
    <location>
        <position position="392"/>
    </location>
    <ligand>
        <name>(2R)-2-phosphoglycerate</name>
        <dbReference type="ChEBI" id="CHEBI:58289"/>
    </ligand>
</feature>
<comment type="function">
    <text evidence="1">Catalyzes the reversible conversion of 2-phosphoglycerate (2-PG) into phosphoenolpyruvate (PEP). It is essential for the degradation of carbohydrates via glycolysis.</text>
</comment>
<comment type="catalytic activity">
    <reaction evidence="1">
        <text>(2R)-2-phosphoglycerate = phosphoenolpyruvate + H2O</text>
        <dbReference type="Rhea" id="RHEA:10164"/>
        <dbReference type="ChEBI" id="CHEBI:15377"/>
        <dbReference type="ChEBI" id="CHEBI:58289"/>
        <dbReference type="ChEBI" id="CHEBI:58702"/>
        <dbReference type="EC" id="4.2.1.11"/>
    </reaction>
</comment>
<comment type="cofactor">
    <cofactor evidence="1">
        <name>Mg(2+)</name>
        <dbReference type="ChEBI" id="CHEBI:18420"/>
    </cofactor>
    <text evidence="1">Binds a second Mg(2+) ion via substrate during catalysis.</text>
</comment>
<comment type="pathway">
    <text evidence="1">Carbohydrate degradation; glycolysis; pyruvate from D-glyceraldehyde 3-phosphate: step 4/5.</text>
</comment>
<comment type="subunit">
    <text evidence="1">Component of the RNA degradosome, a multiprotein complex involved in RNA processing and mRNA degradation.</text>
</comment>
<comment type="subcellular location">
    <subcellularLocation>
        <location evidence="1">Cytoplasm</location>
    </subcellularLocation>
    <subcellularLocation>
        <location evidence="1">Secreted</location>
    </subcellularLocation>
    <subcellularLocation>
        <location evidence="1">Cell surface</location>
    </subcellularLocation>
    <text evidence="1">Fractions of enolase are present in both the cytoplasm and on the cell surface.</text>
</comment>
<comment type="similarity">
    <text evidence="1">Belongs to the enolase family.</text>
</comment>
<proteinExistence type="inferred from homology"/>
<gene>
    <name evidence="1" type="primary">eno</name>
    <name type="ordered locus">ACICU_02007</name>
</gene>
<dbReference type="EC" id="4.2.1.11" evidence="1"/>
<dbReference type="EMBL" id="CP000863">
    <property type="protein sequence ID" value="ACC57319.1"/>
    <property type="molecule type" value="Genomic_DNA"/>
</dbReference>
<dbReference type="RefSeq" id="WP_000078452.1">
    <property type="nucleotide sequence ID" value="NZ_CP031380.1"/>
</dbReference>
<dbReference type="SMR" id="B2I2A5"/>
<dbReference type="GeneID" id="92894149"/>
<dbReference type="KEGG" id="abc:ACICU_02007"/>
<dbReference type="HOGENOM" id="CLU_031223_2_1_6"/>
<dbReference type="UniPathway" id="UPA00109">
    <property type="reaction ID" value="UER00187"/>
</dbReference>
<dbReference type="Proteomes" id="UP000008839">
    <property type="component" value="Chromosome"/>
</dbReference>
<dbReference type="GO" id="GO:0009986">
    <property type="term" value="C:cell surface"/>
    <property type="evidence" value="ECO:0007669"/>
    <property type="project" value="UniProtKB-SubCell"/>
</dbReference>
<dbReference type="GO" id="GO:0005576">
    <property type="term" value="C:extracellular region"/>
    <property type="evidence" value="ECO:0007669"/>
    <property type="project" value="UniProtKB-SubCell"/>
</dbReference>
<dbReference type="GO" id="GO:0000015">
    <property type="term" value="C:phosphopyruvate hydratase complex"/>
    <property type="evidence" value="ECO:0007669"/>
    <property type="project" value="InterPro"/>
</dbReference>
<dbReference type="GO" id="GO:0000287">
    <property type="term" value="F:magnesium ion binding"/>
    <property type="evidence" value="ECO:0007669"/>
    <property type="project" value="UniProtKB-UniRule"/>
</dbReference>
<dbReference type="GO" id="GO:0004634">
    <property type="term" value="F:phosphopyruvate hydratase activity"/>
    <property type="evidence" value="ECO:0007669"/>
    <property type="project" value="UniProtKB-UniRule"/>
</dbReference>
<dbReference type="GO" id="GO:0006096">
    <property type="term" value="P:glycolytic process"/>
    <property type="evidence" value="ECO:0007669"/>
    <property type="project" value="UniProtKB-UniRule"/>
</dbReference>
<dbReference type="CDD" id="cd03313">
    <property type="entry name" value="enolase"/>
    <property type="match status" value="1"/>
</dbReference>
<dbReference type="FunFam" id="3.20.20.120:FF:000001">
    <property type="entry name" value="Enolase"/>
    <property type="match status" value="1"/>
</dbReference>
<dbReference type="FunFam" id="3.30.390.10:FF:000001">
    <property type="entry name" value="Enolase"/>
    <property type="match status" value="1"/>
</dbReference>
<dbReference type="Gene3D" id="3.20.20.120">
    <property type="entry name" value="Enolase-like C-terminal domain"/>
    <property type="match status" value="1"/>
</dbReference>
<dbReference type="Gene3D" id="3.30.390.10">
    <property type="entry name" value="Enolase-like, N-terminal domain"/>
    <property type="match status" value="1"/>
</dbReference>
<dbReference type="HAMAP" id="MF_00318">
    <property type="entry name" value="Enolase"/>
    <property type="match status" value="1"/>
</dbReference>
<dbReference type="InterPro" id="IPR000941">
    <property type="entry name" value="Enolase"/>
</dbReference>
<dbReference type="InterPro" id="IPR036849">
    <property type="entry name" value="Enolase-like_C_sf"/>
</dbReference>
<dbReference type="InterPro" id="IPR029017">
    <property type="entry name" value="Enolase-like_N"/>
</dbReference>
<dbReference type="InterPro" id="IPR020810">
    <property type="entry name" value="Enolase_C"/>
</dbReference>
<dbReference type="InterPro" id="IPR020809">
    <property type="entry name" value="Enolase_CS"/>
</dbReference>
<dbReference type="InterPro" id="IPR020811">
    <property type="entry name" value="Enolase_N"/>
</dbReference>
<dbReference type="NCBIfam" id="TIGR01060">
    <property type="entry name" value="eno"/>
    <property type="match status" value="1"/>
</dbReference>
<dbReference type="PANTHER" id="PTHR11902">
    <property type="entry name" value="ENOLASE"/>
    <property type="match status" value="1"/>
</dbReference>
<dbReference type="PANTHER" id="PTHR11902:SF1">
    <property type="entry name" value="ENOLASE"/>
    <property type="match status" value="1"/>
</dbReference>
<dbReference type="Pfam" id="PF00113">
    <property type="entry name" value="Enolase_C"/>
    <property type="match status" value="1"/>
</dbReference>
<dbReference type="Pfam" id="PF03952">
    <property type="entry name" value="Enolase_N"/>
    <property type="match status" value="1"/>
</dbReference>
<dbReference type="PIRSF" id="PIRSF001400">
    <property type="entry name" value="Enolase"/>
    <property type="match status" value="1"/>
</dbReference>
<dbReference type="PRINTS" id="PR00148">
    <property type="entry name" value="ENOLASE"/>
</dbReference>
<dbReference type="SFLD" id="SFLDF00002">
    <property type="entry name" value="enolase"/>
    <property type="match status" value="1"/>
</dbReference>
<dbReference type="SFLD" id="SFLDG00178">
    <property type="entry name" value="enolase"/>
    <property type="match status" value="1"/>
</dbReference>
<dbReference type="SMART" id="SM01192">
    <property type="entry name" value="Enolase_C"/>
    <property type="match status" value="1"/>
</dbReference>
<dbReference type="SMART" id="SM01193">
    <property type="entry name" value="Enolase_N"/>
    <property type="match status" value="1"/>
</dbReference>
<dbReference type="SUPFAM" id="SSF51604">
    <property type="entry name" value="Enolase C-terminal domain-like"/>
    <property type="match status" value="1"/>
</dbReference>
<dbReference type="SUPFAM" id="SSF54826">
    <property type="entry name" value="Enolase N-terminal domain-like"/>
    <property type="match status" value="1"/>
</dbReference>
<dbReference type="PROSITE" id="PS00164">
    <property type="entry name" value="ENOLASE"/>
    <property type="match status" value="1"/>
</dbReference>
<sequence length="429" mass="46216">MSQIVDIRAREILDSRGNPTIEADVILESGVVGRACAPSGASTGSREALELRDGDKSRYLGKGVRTAVQNVNSSIHELLVGQSVFEQKALDEKMIAFDGTENKSKLGANATLAVSLAAAHAAAAEQKLPLFQYIANLRGQTTLTMPVPMMNILNGGAHADNTVDIQEFMIEPVGFTSFAEALRAGAEVFHSLKSVLKKQGLNTAVGDEGGFAPNLRSNEEAITVILQAIEQTGYKAGSDIMLALDCASSEFYKNGQYILEGEGNKSFTSNQFADYLAGLVKQYPIISIEDGLDESDWEGWSYLTSILGDKIQLVGDDLFVTNPKILQRGIDEKVGNSILIKYNQIGTLTETLDAIYLAKANGYTTVISHRSGETEDSTIADLAVGTAAGQIKTGSLCRSDRVSKYNQLLRIEELTKAVYRGKAEFKGLN</sequence>
<evidence type="ECO:0000255" key="1">
    <source>
        <dbReference type="HAMAP-Rule" id="MF_00318"/>
    </source>
</evidence>